<accession>B4F1U6</accession>
<feature type="chain" id="PRO_1000124321" description="Ketol-acid reductoisomerase (NADP(+))">
    <location>
        <begin position="1"/>
        <end position="491"/>
    </location>
</feature>
<feature type="domain" description="KARI N-terminal Rossmann" evidence="2">
    <location>
        <begin position="17"/>
        <end position="208"/>
    </location>
</feature>
<feature type="domain" description="KARI C-terminal knotted 1" evidence="3">
    <location>
        <begin position="209"/>
        <end position="344"/>
    </location>
</feature>
<feature type="domain" description="KARI C-terminal knotted 2" evidence="3">
    <location>
        <begin position="345"/>
        <end position="484"/>
    </location>
</feature>
<feature type="active site" evidence="1">
    <location>
        <position position="132"/>
    </location>
</feature>
<feature type="binding site" evidence="1">
    <location>
        <begin position="45"/>
        <end position="48"/>
    </location>
    <ligand>
        <name>NADP(+)</name>
        <dbReference type="ChEBI" id="CHEBI:58349"/>
    </ligand>
</feature>
<feature type="binding site" evidence="1">
    <location>
        <position position="68"/>
    </location>
    <ligand>
        <name>NADP(+)</name>
        <dbReference type="ChEBI" id="CHEBI:58349"/>
    </ligand>
</feature>
<feature type="binding site" evidence="1">
    <location>
        <position position="76"/>
    </location>
    <ligand>
        <name>NADP(+)</name>
        <dbReference type="ChEBI" id="CHEBI:58349"/>
    </ligand>
</feature>
<feature type="binding site" evidence="1">
    <location>
        <position position="78"/>
    </location>
    <ligand>
        <name>NADP(+)</name>
        <dbReference type="ChEBI" id="CHEBI:58349"/>
    </ligand>
</feature>
<feature type="binding site" evidence="1">
    <location>
        <begin position="108"/>
        <end position="110"/>
    </location>
    <ligand>
        <name>NADP(+)</name>
        <dbReference type="ChEBI" id="CHEBI:58349"/>
    </ligand>
</feature>
<feature type="binding site" evidence="1">
    <location>
        <position position="158"/>
    </location>
    <ligand>
        <name>NADP(+)</name>
        <dbReference type="ChEBI" id="CHEBI:58349"/>
    </ligand>
</feature>
<feature type="binding site" evidence="1">
    <location>
        <position position="217"/>
    </location>
    <ligand>
        <name>Mg(2+)</name>
        <dbReference type="ChEBI" id="CHEBI:18420"/>
        <label>1</label>
    </ligand>
</feature>
<feature type="binding site" evidence="1">
    <location>
        <position position="217"/>
    </location>
    <ligand>
        <name>Mg(2+)</name>
        <dbReference type="ChEBI" id="CHEBI:18420"/>
        <label>2</label>
    </ligand>
</feature>
<feature type="binding site" evidence="1">
    <location>
        <position position="221"/>
    </location>
    <ligand>
        <name>Mg(2+)</name>
        <dbReference type="ChEBI" id="CHEBI:18420"/>
        <label>1</label>
    </ligand>
</feature>
<feature type="binding site" evidence="1">
    <location>
        <position position="389"/>
    </location>
    <ligand>
        <name>Mg(2+)</name>
        <dbReference type="ChEBI" id="CHEBI:18420"/>
        <label>2</label>
    </ligand>
</feature>
<feature type="binding site" evidence="1">
    <location>
        <position position="393"/>
    </location>
    <ligand>
        <name>Mg(2+)</name>
        <dbReference type="ChEBI" id="CHEBI:18420"/>
        <label>2</label>
    </ligand>
</feature>
<feature type="binding site" evidence="1">
    <location>
        <position position="414"/>
    </location>
    <ligand>
        <name>substrate</name>
    </ligand>
</feature>
<sequence>MANYFNTLNLRQQLSQLGKCRFMSRDEFADEANYLKGKKVVIVGCGAQGLNQGLNMRDSGLDIAYALRQEAIDEKRASWRRATENGFEVGTYEALIPQADLVVNLTPDKQHSAVVQAVQPLMKSGAALGYSHGFNIVEVGEKIRDDITVVMVAPKCPGTEVREEYKRGFGVPTLIAVHPENDAKGEGMAIAKAWAAATGGHRAGVLESSFVAEVKSDLMGEQTILCGMLQAGSLLCYDKMVAEGVEPGYAGKLIQFGWETITEALKQGGITLMMDRLSNPAKMRAYALSEQLKEIMAPLFAKHMDDIISGKFSETMMADWANDDKNLLTWREETGASAFENYPEYEGKISEQEYFDHGVLMVAMVKAGVELAFDTMIEAGIIAESAYYESLHELPLIANTIARKRLYEMNVVISDTAEYGNYLFSFAAVPMLKEFMTTLQSGDLAKHVPDSGTDNAQLRDINEAIRQHPIEIVGKKLRGYMTDMKKIAVAN</sequence>
<comment type="function">
    <text evidence="1">Involved in the biosynthesis of branched-chain amino acids (BCAA). Catalyzes an alkyl-migration followed by a ketol-acid reduction of (S)-2-acetolactate (S2AL) to yield (R)-2,3-dihydroxy-isovalerate. In the isomerase reaction, S2AL is rearranged via a Mg-dependent methyl migration to produce 3-hydroxy-3-methyl-2-ketobutyrate (HMKB). In the reductase reaction, this 2-ketoacid undergoes a metal-dependent reduction by NADPH to yield (R)-2,3-dihydroxy-isovalerate.</text>
</comment>
<comment type="catalytic activity">
    <reaction evidence="1">
        <text>(2R)-2,3-dihydroxy-3-methylbutanoate + NADP(+) = (2S)-2-acetolactate + NADPH + H(+)</text>
        <dbReference type="Rhea" id="RHEA:22068"/>
        <dbReference type="ChEBI" id="CHEBI:15378"/>
        <dbReference type="ChEBI" id="CHEBI:49072"/>
        <dbReference type="ChEBI" id="CHEBI:57783"/>
        <dbReference type="ChEBI" id="CHEBI:58349"/>
        <dbReference type="ChEBI" id="CHEBI:58476"/>
        <dbReference type="EC" id="1.1.1.86"/>
    </reaction>
</comment>
<comment type="catalytic activity">
    <reaction evidence="1">
        <text>(2R,3R)-2,3-dihydroxy-3-methylpentanoate + NADP(+) = (S)-2-ethyl-2-hydroxy-3-oxobutanoate + NADPH + H(+)</text>
        <dbReference type="Rhea" id="RHEA:13493"/>
        <dbReference type="ChEBI" id="CHEBI:15378"/>
        <dbReference type="ChEBI" id="CHEBI:49256"/>
        <dbReference type="ChEBI" id="CHEBI:49258"/>
        <dbReference type="ChEBI" id="CHEBI:57783"/>
        <dbReference type="ChEBI" id="CHEBI:58349"/>
        <dbReference type="EC" id="1.1.1.86"/>
    </reaction>
</comment>
<comment type="cofactor">
    <cofactor evidence="1">
        <name>Mg(2+)</name>
        <dbReference type="ChEBI" id="CHEBI:18420"/>
    </cofactor>
    <text evidence="1">Binds 2 magnesium ions per subunit.</text>
</comment>
<comment type="pathway">
    <text evidence="1">Amino-acid biosynthesis; L-isoleucine biosynthesis; L-isoleucine from 2-oxobutanoate: step 2/4.</text>
</comment>
<comment type="pathway">
    <text evidence="1">Amino-acid biosynthesis; L-valine biosynthesis; L-valine from pyruvate: step 2/4.</text>
</comment>
<comment type="similarity">
    <text evidence="1">Belongs to the ketol-acid reductoisomerase family.</text>
</comment>
<protein>
    <recommendedName>
        <fullName evidence="1">Ketol-acid reductoisomerase (NADP(+))</fullName>
        <shortName evidence="1">KARI</shortName>
        <ecNumber evidence="1">1.1.1.86</ecNumber>
    </recommendedName>
    <alternativeName>
        <fullName evidence="1">Acetohydroxy-acid isomeroreductase</fullName>
        <shortName evidence="1">AHIR</shortName>
    </alternativeName>
    <alternativeName>
        <fullName evidence="1">Alpha-keto-beta-hydroxylacyl reductoisomerase</fullName>
    </alternativeName>
    <alternativeName>
        <fullName evidence="1">Ketol-acid reductoisomerase type 2</fullName>
    </alternativeName>
    <alternativeName>
        <fullName evidence="1">Ketol-acid reductoisomerase type II</fullName>
    </alternativeName>
</protein>
<gene>
    <name evidence="1" type="primary">ilvC</name>
    <name type="ordered locus">PMI3305</name>
</gene>
<name>ILVC_PROMH</name>
<proteinExistence type="inferred from homology"/>
<keyword id="KW-0028">Amino-acid biosynthesis</keyword>
<keyword id="KW-0100">Branched-chain amino acid biosynthesis</keyword>
<keyword id="KW-0460">Magnesium</keyword>
<keyword id="KW-0479">Metal-binding</keyword>
<keyword id="KW-0521">NADP</keyword>
<keyword id="KW-0560">Oxidoreductase</keyword>
<keyword id="KW-1185">Reference proteome</keyword>
<keyword id="KW-0677">Repeat</keyword>
<reference key="1">
    <citation type="journal article" date="2008" name="J. Bacteriol.">
        <title>Complete genome sequence of uropathogenic Proteus mirabilis, a master of both adherence and motility.</title>
        <authorList>
            <person name="Pearson M.M."/>
            <person name="Sebaihia M."/>
            <person name="Churcher C."/>
            <person name="Quail M.A."/>
            <person name="Seshasayee A.S."/>
            <person name="Luscombe N.M."/>
            <person name="Abdellah Z."/>
            <person name="Arrosmith C."/>
            <person name="Atkin B."/>
            <person name="Chillingworth T."/>
            <person name="Hauser H."/>
            <person name="Jagels K."/>
            <person name="Moule S."/>
            <person name="Mungall K."/>
            <person name="Norbertczak H."/>
            <person name="Rabbinowitsch E."/>
            <person name="Walker D."/>
            <person name="Whithead S."/>
            <person name="Thomson N.R."/>
            <person name="Rather P.N."/>
            <person name="Parkhill J."/>
            <person name="Mobley H.L.T."/>
        </authorList>
    </citation>
    <scope>NUCLEOTIDE SEQUENCE [LARGE SCALE GENOMIC DNA]</scope>
    <source>
        <strain>HI4320</strain>
    </source>
</reference>
<dbReference type="EC" id="1.1.1.86" evidence="1"/>
<dbReference type="EMBL" id="AM942759">
    <property type="protein sequence ID" value="CAR46480.1"/>
    <property type="molecule type" value="Genomic_DNA"/>
</dbReference>
<dbReference type="RefSeq" id="WP_012368696.1">
    <property type="nucleotide sequence ID" value="NC_010554.1"/>
</dbReference>
<dbReference type="SMR" id="B4F1U6"/>
<dbReference type="EnsemblBacteria" id="CAR46480">
    <property type="protein sequence ID" value="CAR46480"/>
    <property type="gene ID" value="PMI3305"/>
</dbReference>
<dbReference type="GeneID" id="6803458"/>
<dbReference type="KEGG" id="pmr:PMI3305"/>
<dbReference type="eggNOG" id="COG0059">
    <property type="taxonomic scope" value="Bacteria"/>
</dbReference>
<dbReference type="HOGENOM" id="CLU_551905_0_0_6"/>
<dbReference type="UniPathway" id="UPA00047">
    <property type="reaction ID" value="UER00056"/>
</dbReference>
<dbReference type="UniPathway" id="UPA00049">
    <property type="reaction ID" value="UER00060"/>
</dbReference>
<dbReference type="Proteomes" id="UP000008319">
    <property type="component" value="Chromosome"/>
</dbReference>
<dbReference type="GO" id="GO:0005829">
    <property type="term" value="C:cytosol"/>
    <property type="evidence" value="ECO:0007669"/>
    <property type="project" value="TreeGrafter"/>
</dbReference>
<dbReference type="GO" id="GO:0004455">
    <property type="term" value="F:ketol-acid reductoisomerase activity"/>
    <property type="evidence" value="ECO:0007669"/>
    <property type="project" value="UniProtKB-UniRule"/>
</dbReference>
<dbReference type="GO" id="GO:0000287">
    <property type="term" value="F:magnesium ion binding"/>
    <property type="evidence" value="ECO:0007669"/>
    <property type="project" value="UniProtKB-UniRule"/>
</dbReference>
<dbReference type="GO" id="GO:0009097">
    <property type="term" value="P:isoleucine biosynthetic process"/>
    <property type="evidence" value="ECO:0007669"/>
    <property type="project" value="UniProtKB-UniRule"/>
</dbReference>
<dbReference type="GO" id="GO:0009099">
    <property type="term" value="P:L-valine biosynthetic process"/>
    <property type="evidence" value="ECO:0007669"/>
    <property type="project" value="UniProtKB-UniRule"/>
</dbReference>
<dbReference type="FunFam" id="1.10.1040.10:FF:000007">
    <property type="entry name" value="Ketol-acid reductoisomerase (NADP(+))"/>
    <property type="match status" value="1"/>
</dbReference>
<dbReference type="FunFam" id="3.40.50.720:FF:000043">
    <property type="entry name" value="Ketol-acid reductoisomerase (NADP(+))"/>
    <property type="match status" value="1"/>
</dbReference>
<dbReference type="Gene3D" id="1.10.1040.10">
    <property type="entry name" value="N-(1-d-carboxylethyl)-l-norvaline Dehydrogenase, domain 2"/>
    <property type="match status" value="1"/>
</dbReference>
<dbReference type="Gene3D" id="3.40.50.720">
    <property type="entry name" value="NAD(P)-binding Rossmann-like Domain"/>
    <property type="match status" value="1"/>
</dbReference>
<dbReference type="HAMAP" id="MF_00435">
    <property type="entry name" value="IlvC"/>
    <property type="match status" value="1"/>
</dbReference>
<dbReference type="InterPro" id="IPR008927">
    <property type="entry name" value="6-PGluconate_DH-like_C_sf"/>
</dbReference>
<dbReference type="InterPro" id="IPR013328">
    <property type="entry name" value="6PGD_dom2"/>
</dbReference>
<dbReference type="InterPro" id="IPR013023">
    <property type="entry name" value="KARI"/>
</dbReference>
<dbReference type="InterPro" id="IPR000506">
    <property type="entry name" value="KARI_C"/>
</dbReference>
<dbReference type="InterPro" id="IPR013116">
    <property type="entry name" value="KARI_N"/>
</dbReference>
<dbReference type="InterPro" id="IPR036291">
    <property type="entry name" value="NAD(P)-bd_dom_sf"/>
</dbReference>
<dbReference type="NCBIfam" id="TIGR00465">
    <property type="entry name" value="ilvC"/>
    <property type="match status" value="1"/>
</dbReference>
<dbReference type="NCBIfam" id="NF003557">
    <property type="entry name" value="PRK05225.1"/>
    <property type="match status" value="1"/>
</dbReference>
<dbReference type="PANTHER" id="PTHR21371">
    <property type="entry name" value="KETOL-ACID REDUCTOISOMERASE, MITOCHONDRIAL"/>
    <property type="match status" value="1"/>
</dbReference>
<dbReference type="PANTHER" id="PTHR21371:SF1">
    <property type="entry name" value="KETOL-ACID REDUCTOISOMERASE, MITOCHONDRIAL"/>
    <property type="match status" value="1"/>
</dbReference>
<dbReference type="Pfam" id="PF01450">
    <property type="entry name" value="KARI_C"/>
    <property type="match status" value="2"/>
</dbReference>
<dbReference type="Pfam" id="PF07991">
    <property type="entry name" value="KARI_N"/>
    <property type="match status" value="1"/>
</dbReference>
<dbReference type="SUPFAM" id="SSF48179">
    <property type="entry name" value="6-phosphogluconate dehydrogenase C-terminal domain-like"/>
    <property type="match status" value="2"/>
</dbReference>
<dbReference type="SUPFAM" id="SSF51735">
    <property type="entry name" value="NAD(P)-binding Rossmann-fold domains"/>
    <property type="match status" value="1"/>
</dbReference>
<dbReference type="PROSITE" id="PS51851">
    <property type="entry name" value="KARI_C"/>
    <property type="match status" value="2"/>
</dbReference>
<dbReference type="PROSITE" id="PS51850">
    <property type="entry name" value="KARI_N"/>
    <property type="match status" value="1"/>
</dbReference>
<organism>
    <name type="scientific">Proteus mirabilis (strain HI4320)</name>
    <dbReference type="NCBI Taxonomy" id="529507"/>
    <lineage>
        <taxon>Bacteria</taxon>
        <taxon>Pseudomonadati</taxon>
        <taxon>Pseudomonadota</taxon>
        <taxon>Gammaproteobacteria</taxon>
        <taxon>Enterobacterales</taxon>
        <taxon>Morganellaceae</taxon>
        <taxon>Proteus</taxon>
    </lineage>
</organism>
<evidence type="ECO:0000255" key="1">
    <source>
        <dbReference type="HAMAP-Rule" id="MF_00435"/>
    </source>
</evidence>
<evidence type="ECO:0000255" key="2">
    <source>
        <dbReference type="PROSITE-ProRule" id="PRU01197"/>
    </source>
</evidence>
<evidence type="ECO:0000255" key="3">
    <source>
        <dbReference type="PROSITE-ProRule" id="PRU01198"/>
    </source>
</evidence>